<gene>
    <name type="primary">DNAJB11</name>
</gene>
<name>DJB11_PONAB</name>
<accession>Q5RAJ6</accession>
<organism>
    <name type="scientific">Pongo abelii</name>
    <name type="common">Sumatran orangutan</name>
    <name type="synonym">Pongo pygmaeus abelii</name>
    <dbReference type="NCBI Taxonomy" id="9601"/>
    <lineage>
        <taxon>Eukaryota</taxon>
        <taxon>Metazoa</taxon>
        <taxon>Chordata</taxon>
        <taxon>Craniata</taxon>
        <taxon>Vertebrata</taxon>
        <taxon>Euteleostomi</taxon>
        <taxon>Mammalia</taxon>
        <taxon>Eutheria</taxon>
        <taxon>Euarchontoglires</taxon>
        <taxon>Primates</taxon>
        <taxon>Haplorrhini</taxon>
        <taxon>Catarrhini</taxon>
        <taxon>Hominidae</taxon>
        <taxon>Pongo</taxon>
    </lineage>
</organism>
<sequence length="358" mass="40514">MAPQNLSTFCLLLLYLIGAVIAGRDFYKILGVPRSASIKDIKKAYRKLALQLHPDRNPDDPQAQEKFQDLGAAYEVLSDSEKRKQYDTYGEEGLKDGHQSSHGDIFSHFFGDFGFMFGGTPRQQDRNIPRGSDIIVDLEVTLEEVYAGNFVEVVRNKPVARQAPGKRKCNCRQEMRTTQLGPGRFQMTQEVVCDECPNVKLVNEERTLEVEIEPGVRDGMEYPFIGEGEPHVDGEPGDLRFRIKVVKHPIFERRGDDLYTNVTISLVESLVGFEMDITHLDGHKVHISRDKITRPGAKLWKKGEGLPNFDNNNIKGSLIITFDVDFPKEQLTEEAREGIKQLLKQGSVQKVYNGLQGY</sequence>
<protein>
    <recommendedName>
        <fullName>DnaJ homolog subfamily B member 11</fullName>
    </recommendedName>
    <alternativeName>
        <fullName>ER-associated DNAJ</fullName>
    </alternativeName>
    <alternativeName>
        <fullName>ER-associated Hsp40 co-chaperone</fullName>
    </alternativeName>
    <alternativeName>
        <fullName>Endoplasmic reticulum DNA J domain-containing protein 3</fullName>
        <shortName>ER-resident protein ERdj3</shortName>
        <shortName>ERdj3</shortName>
        <shortName>ERj3p</shortName>
    </alternativeName>
</protein>
<proteinExistence type="evidence at transcript level"/>
<evidence type="ECO:0000250" key="1"/>
<evidence type="ECO:0000250" key="2">
    <source>
        <dbReference type="UniProtKB" id="Q9UBS4"/>
    </source>
</evidence>
<evidence type="ECO:0000255" key="3">
    <source>
        <dbReference type="PROSITE-ProRule" id="PRU00286"/>
    </source>
</evidence>
<evidence type="ECO:0000305" key="4"/>
<comment type="function">
    <text evidence="2">As a co-chaperone for HSPA5 it is required for proper folding, trafficking or degradation of proteins. Binds directly to both unfolded proteins that are substrates for ERAD and nascent unfolded peptide chains, but dissociates from the HSPA5-unfolded protein complex before folding is completed. May help recruiting HSPA5 and other chaperones to the substrate. Stimulates HSPA5 ATPase activity. It is necessary for maturation and correct trafficking of PKD1.</text>
</comment>
<comment type="subunit">
    <text evidence="1">Part of a large chaperone multiprotein complex comprising DNAJB11, HSP90B1, HSPA5, HYOU, PDIA2, PDIA4, PDIA6, PPIB, SDF2L1, UGT1A1 and very small amounts of ERP29, but not, or at very low levels, CALR nor CANX. Binds to denatured substrates in an ATP-independent manner. Interacts via the J domain with HSPA5 in an ATP-dependent manner (By similarity).</text>
</comment>
<comment type="subcellular location">
    <subcellularLocation>
        <location evidence="1">Endoplasmic reticulum lumen</location>
    </subcellularLocation>
</comment>
<comment type="PTM">
    <text evidence="1">Contains high-mannose Endo H-sensitive carbohydrates.</text>
</comment>
<comment type="PTM">
    <text evidence="1">Cys-169, Cys-171, Cys-193 and Cys-196 form intramolecular disulfide bonds. The preferential partner for each Cys is not known (By similarity).</text>
</comment>
<dbReference type="EMBL" id="CR859019">
    <property type="protein sequence ID" value="CAH91214.1"/>
    <property type="molecule type" value="mRNA"/>
</dbReference>
<dbReference type="RefSeq" id="XP_002814428.1">
    <property type="nucleotide sequence ID" value="XM_002814382.6"/>
</dbReference>
<dbReference type="RefSeq" id="XP_054409081.1">
    <property type="nucleotide sequence ID" value="XM_054553106.2"/>
</dbReference>
<dbReference type="RefSeq" id="XP_063578450.1">
    <property type="nucleotide sequence ID" value="XM_063722380.1"/>
</dbReference>
<dbReference type="SMR" id="Q5RAJ6"/>
<dbReference type="FunCoup" id="Q5RAJ6">
    <property type="interactions" value="2429"/>
</dbReference>
<dbReference type="STRING" id="9601.ENSPPYP00000016085"/>
<dbReference type="GlyCosmos" id="Q5RAJ6">
    <property type="glycosylation" value="1 site, No reported glycans"/>
</dbReference>
<dbReference type="GeneID" id="100462077"/>
<dbReference type="KEGG" id="pon:100462077"/>
<dbReference type="CTD" id="51726"/>
<dbReference type="eggNOG" id="KOG0713">
    <property type="taxonomic scope" value="Eukaryota"/>
</dbReference>
<dbReference type="HOGENOM" id="CLU_017633_0_0_1"/>
<dbReference type="InParanoid" id="Q5RAJ6"/>
<dbReference type="OrthoDB" id="550424at2759"/>
<dbReference type="TreeFam" id="TF105144"/>
<dbReference type="Proteomes" id="UP000001595">
    <property type="component" value="Chromosome 3"/>
</dbReference>
<dbReference type="GO" id="GO:0005788">
    <property type="term" value="C:endoplasmic reticulum lumen"/>
    <property type="evidence" value="ECO:0007669"/>
    <property type="project" value="UniProtKB-SubCell"/>
</dbReference>
<dbReference type="GO" id="GO:0051787">
    <property type="term" value="F:misfolded protein binding"/>
    <property type="evidence" value="ECO:0007669"/>
    <property type="project" value="TreeGrafter"/>
</dbReference>
<dbReference type="GO" id="GO:0051082">
    <property type="term" value="F:unfolded protein binding"/>
    <property type="evidence" value="ECO:0007669"/>
    <property type="project" value="InterPro"/>
</dbReference>
<dbReference type="GO" id="GO:0006457">
    <property type="term" value="P:protein folding"/>
    <property type="evidence" value="ECO:0007669"/>
    <property type="project" value="InterPro"/>
</dbReference>
<dbReference type="GO" id="GO:0051604">
    <property type="term" value="P:protein maturation"/>
    <property type="evidence" value="ECO:0000250"/>
    <property type="project" value="UniProtKB"/>
</dbReference>
<dbReference type="CDD" id="cd06257">
    <property type="entry name" value="DnaJ"/>
    <property type="match status" value="1"/>
</dbReference>
<dbReference type="CDD" id="cd10747">
    <property type="entry name" value="DnaJ_C"/>
    <property type="match status" value="1"/>
</dbReference>
<dbReference type="FunFam" id="1.10.287.110:FF:000040">
    <property type="entry name" value="dnaJ homolog subfamily B member 11"/>
    <property type="match status" value="1"/>
</dbReference>
<dbReference type="FunFam" id="2.60.260.20:FF:000013">
    <property type="entry name" value="DnaJ subfamily B member 11"/>
    <property type="match status" value="1"/>
</dbReference>
<dbReference type="Gene3D" id="1.10.287.110">
    <property type="entry name" value="DnaJ domain"/>
    <property type="match status" value="1"/>
</dbReference>
<dbReference type="Gene3D" id="2.60.260.20">
    <property type="entry name" value="Urease metallochaperone UreE, N-terminal domain"/>
    <property type="match status" value="2"/>
</dbReference>
<dbReference type="InterPro" id="IPR051736">
    <property type="entry name" value="DnaJ-B11-like"/>
</dbReference>
<dbReference type="InterPro" id="IPR002939">
    <property type="entry name" value="DnaJ_C"/>
</dbReference>
<dbReference type="InterPro" id="IPR001623">
    <property type="entry name" value="DnaJ_domain"/>
</dbReference>
<dbReference type="InterPro" id="IPR018253">
    <property type="entry name" value="DnaJ_domain_CS"/>
</dbReference>
<dbReference type="InterPro" id="IPR008971">
    <property type="entry name" value="HSP40/DnaJ_pept-bd"/>
</dbReference>
<dbReference type="InterPro" id="IPR036869">
    <property type="entry name" value="J_dom_sf"/>
</dbReference>
<dbReference type="PANTHER" id="PTHR44298">
    <property type="entry name" value="DNAJ HOMOLOG SUBFAMILY B MEMBER 11"/>
    <property type="match status" value="1"/>
</dbReference>
<dbReference type="PANTHER" id="PTHR44298:SF1">
    <property type="entry name" value="DNAJ HOMOLOG SUBFAMILY B MEMBER 11"/>
    <property type="match status" value="1"/>
</dbReference>
<dbReference type="Pfam" id="PF00226">
    <property type="entry name" value="DnaJ"/>
    <property type="match status" value="1"/>
</dbReference>
<dbReference type="Pfam" id="PF01556">
    <property type="entry name" value="DnaJ_C"/>
    <property type="match status" value="1"/>
</dbReference>
<dbReference type="PRINTS" id="PR00625">
    <property type="entry name" value="JDOMAIN"/>
</dbReference>
<dbReference type="SMART" id="SM00271">
    <property type="entry name" value="DnaJ"/>
    <property type="match status" value="1"/>
</dbReference>
<dbReference type="SUPFAM" id="SSF46565">
    <property type="entry name" value="Chaperone J-domain"/>
    <property type="match status" value="1"/>
</dbReference>
<dbReference type="SUPFAM" id="SSF49493">
    <property type="entry name" value="HSP40/DnaJ peptide-binding domain"/>
    <property type="match status" value="2"/>
</dbReference>
<dbReference type="PROSITE" id="PS00636">
    <property type="entry name" value="DNAJ_1"/>
    <property type="match status" value="1"/>
</dbReference>
<dbReference type="PROSITE" id="PS50076">
    <property type="entry name" value="DNAJ_2"/>
    <property type="match status" value="1"/>
</dbReference>
<keyword id="KW-0143">Chaperone</keyword>
<keyword id="KW-1015">Disulfide bond</keyword>
<keyword id="KW-0256">Endoplasmic reticulum</keyword>
<keyword id="KW-0325">Glycoprotein</keyword>
<keyword id="KW-0597">Phosphoprotein</keyword>
<keyword id="KW-1185">Reference proteome</keyword>
<keyword id="KW-0732">Signal</keyword>
<feature type="signal peptide" evidence="1">
    <location>
        <begin position="1"/>
        <end position="22"/>
    </location>
</feature>
<feature type="chain" id="PRO_0000290020" description="DnaJ homolog subfamily B member 11">
    <location>
        <begin position="23"/>
        <end position="358"/>
    </location>
</feature>
<feature type="domain" description="J" evidence="3">
    <location>
        <begin position="25"/>
        <end position="90"/>
    </location>
</feature>
<feature type="modified residue" description="Phosphothreonine" evidence="2">
    <location>
        <position position="188"/>
    </location>
</feature>
<feature type="glycosylation site" description="N-linked (GlcNAc...) asparagine" evidence="4">
    <location>
        <position position="261"/>
    </location>
</feature>
<reference key="1">
    <citation type="submission" date="2004-11" db="EMBL/GenBank/DDBJ databases">
        <authorList>
            <consortium name="The German cDNA consortium"/>
        </authorList>
    </citation>
    <scope>NUCLEOTIDE SEQUENCE [LARGE SCALE MRNA]</scope>
    <source>
        <tissue>Kidney</tissue>
    </source>
</reference>